<proteinExistence type="inferred from homology"/>
<comment type="function">
    <text evidence="1">Part of the MsrPQ system that repairs oxidized periplasmic proteins containing methionine sulfoxide residues (Met-O), using respiratory chain electrons. Thus protects these proteins from oxidative-stress damage caused by reactive species of oxygen and chlorine generated by the host defense mechanisms. MsrPQ is essential for the maintenance of envelope integrity under bleach stress, rescuing a wide series of structurally unrelated periplasmic proteins from methionine oxidation, including the primary periplasmic chaperone SurA and the lipoprotein Pal. MsrQ provides electrons for reduction to the reductase catalytic subunit MsrP, using the quinone pool of the respiratory chain.</text>
</comment>
<comment type="cofactor">
    <cofactor evidence="1">
        <name>FMN</name>
        <dbReference type="ChEBI" id="CHEBI:58210"/>
    </cofactor>
    <text evidence="1">Binds 1 FMN per subunit.</text>
</comment>
<comment type="cofactor">
    <cofactor evidence="1">
        <name>heme b</name>
        <dbReference type="ChEBI" id="CHEBI:60344"/>
    </cofactor>
    <text evidence="1">Binds 1 heme b (iron(II)-protoporphyrin IX) group per subunit.</text>
</comment>
<comment type="subunit">
    <text evidence="1">Heterodimer of a catalytic subunit (MsrP) and a heme-binding subunit (MsrQ).</text>
</comment>
<comment type="subcellular location">
    <subcellularLocation>
        <location evidence="1">Cell inner membrane</location>
        <topology evidence="1">Multi-pass membrane protein</topology>
    </subcellularLocation>
</comment>
<comment type="similarity">
    <text evidence="1">Belongs to the MsrQ family.</text>
</comment>
<reference key="1">
    <citation type="journal article" date="2011" name="J. Bacteriol.">
        <title>Comparative genomics of 28 Salmonella enterica isolates: evidence for CRISPR-mediated adaptive sublineage evolution.</title>
        <authorList>
            <person name="Fricke W.F."/>
            <person name="Mammel M.K."/>
            <person name="McDermott P.F."/>
            <person name="Tartera C."/>
            <person name="White D.G."/>
            <person name="Leclerc J.E."/>
            <person name="Ravel J."/>
            <person name="Cebula T.A."/>
        </authorList>
    </citation>
    <scope>NUCLEOTIDE SEQUENCE [LARGE SCALE GENOMIC DNA]</scope>
    <source>
        <strain>CVM19633</strain>
    </source>
</reference>
<protein>
    <recommendedName>
        <fullName evidence="1">Protein-methionine-sulfoxide reductase heme-binding subunit MsrQ</fullName>
    </recommendedName>
    <alternativeName>
        <fullName evidence="1">Flavocytochrome MsrQ</fullName>
    </alternativeName>
</protein>
<gene>
    <name evidence="1" type="primary">msrQ</name>
    <name type="ordered locus">SeSA_A3570</name>
</gene>
<evidence type="ECO:0000255" key="1">
    <source>
        <dbReference type="HAMAP-Rule" id="MF_01207"/>
    </source>
</evidence>
<organism>
    <name type="scientific">Salmonella schwarzengrund (strain CVM19633)</name>
    <dbReference type="NCBI Taxonomy" id="439843"/>
    <lineage>
        <taxon>Bacteria</taxon>
        <taxon>Pseudomonadati</taxon>
        <taxon>Pseudomonadota</taxon>
        <taxon>Gammaproteobacteria</taxon>
        <taxon>Enterobacterales</taxon>
        <taxon>Enterobacteriaceae</taxon>
        <taxon>Salmonella</taxon>
    </lineage>
</organism>
<name>MSRQ_SALSV</name>
<feature type="chain" id="PRO_1000138747" description="Protein-methionine-sulfoxide reductase heme-binding subunit MsrQ">
    <location>
        <begin position="1"/>
        <end position="199"/>
    </location>
</feature>
<feature type="transmembrane region" description="Helical" evidence="1">
    <location>
        <begin position="10"/>
        <end position="30"/>
    </location>
</feature>
<feature type="transmembrane region" description="Helical" evidence="1">
    <location>
        <begin position="82"/>
        <end position="102"/>
    </location>
</feature>
<feature type="transmembrane region" description="Helical" evidence="1">
    <location>
        <begin position="116"/>
        <end position="136"/>
    </location>
</feature>
<feature type="transmembrane region" description="Helical" evidence="1">
    <location>
        <begin position="153"/>
        <end position="173"/>
    </location>
</feature>
<dbReference type="EMBL" id="CP001127">
    <property type="protein sequence ID" value="ACF89366.1"/>
    <property type="molecule type" value="Genomic_DNA"/>
</dbReference>
<dbReference type="RefSeq" id="WP_001240053.1">
    <property type="nucleotide sequence ID" value="NC_011094.1"/>
</dbReference>
<dbReference type="SMR" id="B4TX86"/>
<dbReference type="KEGG" id="sew:SeSA_A3570"/>
<dbReference type="HOGENOM" id="CLU_080662_1_0_6"/>
<dbReference type="Proteomes" id="UP000001865">
    <property type="component" value="Chromosome"/>
</dbReference>
<dbReference type="GO" id="GO:0005886">
    <property type="term" value="C:plasma membrane"/>
    <property type="evidence" value="ECO:0007669"/>
    <property type="project" value="UniProtKB-SubCell"/>
</dbReference>
<dbReference type="GO" id="GO:0009055">
    <property type="term" value="F:electron transfer activity"/>
    <property type="evidence" value="ECO:0007669"/>
    <property type="project" value="UniProtKB-UniRule"/>
</dbReference>
<dbReference type="GO" id="GO:0010181">
    <property type="term" value="F:FMN binding"/>
    <property type="evidence" value="ECO:0007669"/>
    <property type="project" value="UniProtKB-UniRule"/>
</dbReference>
<dbReference type="GO" id="GO:0020037">
    <property type="term" value="F:heme binding"/>
    <property type="evidence" value="ECO:0007669"/>
    <property type="project" value="UniProtKB-UniRule"/>
</dbReference>
<dbReference type="GO" id="GO:0046872">
    <property type="term" value="F:metal ion binding"/>
    <property type="evidence" value="ECO:0007669"/>
    <property type="project" value="UniProtKB-KW"/>
</dbReference>
<dbReference type="GO" id="GO:0016679">
    <property type="term" value="F:oxidoreductase activity, acting on diphenols and related substances as donors"/>
    <property type="evidence" value="ECO:0007669"/>
    <property type="project" value="TreeGrafter"/>
</dbReference>
<dbReference type="GO" id="GO:0030091">
    <property type="term" value="P:protein repair"/>
    <property type="evidence" value="ECO:0007669"/>
    <property type="project" value="UniProtKB-UniRule"/>
</dbReference>
<dbReference type="HAMAP" id="MF_01207">
    <property type="entry name" value="MsrQ"/>
    <property type="match status" value="1"/>
</dbReference>
<dbReference type="InterPro" id="IPR013130">
    <property type="entry name" value="Fe3_Rdtase_TM_dom"/>
</dbReference>
<dbReference type="InterPro" id="IPR022837">
    <property type="entry name" value="MsrQ-like"/>
</dbReference>
<dbReference type="NCBIfam" id="NF003831">
    <property type="entry name" value="PRK05419.1-2"/>
    <property type="match status" value="1"/>
</dbReference>
<dbReference type="NCBIfam" id="NF003832">
    <property type="entry name" value="PRK05419.1-4"/>
    <property type="match status" value="1"/>
</dbReference>
<dbReference type="PANTHER" id="PTHR36964">
    <property type="entry name" value="PROTEIN-METHIONINE-SULFOXIDE REDUCTASE HEME-BINDING SUBUNIT MSRQ"/>
    <property type="match status" value="1"/>
</dbReference>
<dbReference type="PANTHER" id="PTHR36964:SF1">
    <property type="entry name" value="PROTEIN-METHIONINE-SULFOXIDE REDUCTASE HEME-BINDING SUBUNIT MSRQ"/>
    <property type="match status" value="1"/>
</dbReference>
<dbReference type="Pfam" id="PF01794">
    <property type="entry name" value="Ferric_reduct"/>
    <property type="match status" value="1"/>
</dbReference>
<accession>B4TX86</accession>
<keyword id="KW-0997">Cell inner membrane</keyword>
<keyword id="KW-1003">Cell membrane</keyword>
<keyword id="KW-0249">Electron transport</keyword>
<keyword id="KW-0285">Flavoprotein</keyword>
<keyword id="KW-0288">FMN</keyword>
<keyword id="KW-0349">Heme</keyword>
<keyword id="KW-0408">Iron</keyword>
<keyword id="KW-0472">Membrane</keyword>
<keyword id="KW-0479">Metal-binding</keyword>
<keyword id="KW-0812">Transmembrane</keyword>
<keyword id="KW-1133">Transmembrane helix</keyword>
<keyword id="KW-0813">Transport</keyword>
<sequence length="199" mass="22868">MRLTAKQITWLKVCLHLAGFLPLLWLFWAINHGGLSADPVKDIQHFTGRTALKFLLATLLVSPLARYAKQPLLIRTRRLLGLWCFVWATLHLTSYALLELGIHNLALLGSELISRPYLTLGIISWLVLLALTLTSTQFAQRKLGKRWQTLHNVVYLVAILAPIHYLWSVKILSPQPVIYAALALALLALRYRKFRQWWR</sequence>